<protein>
    <recommendedName>
        <fullName evidence="7">LRP chaperone MESD</fullName>
    </recommendedName>
    <alternativeName>
        <fullName>LDLR chaperone MESD</fullName>
    </alternativeName>
    <alternativeName>
        <fullName>Mesoderm development candidate 2</fullName>
    </alternativeName>
    <alternativeName>
        <fullName>Mesoderm development protein</fullName>
    </alternativeName>
</protein>
<proteinExistence type="evidence at transcript level"/>
<gene>
    <name type="primary">mesd</name>
    <name type="synonym">mesdc2</name>
    <name type="ORF">zgc:158636</name>
</gene>
<keyword id="KW-0025">Alternative splicing</keyword>
<keyword id="KW-0143">Chaperone</keyword>
<keyword id="KW-0256">Endoplasmic reticulum</keyword>
<keyword id="KW-1185">Reference proteome</keyword>
<keyword id="KW-0732">Signal</keyword>
<keyword id="KW-0879">Wnt signaling pathway</keyword>
<organism>
    <name type="scientific">Danio rerio</name>
    <name type="common">Zebrafish</name>
    <name type="synonym">Brachydanio rerio</name>
    <dbReference type="NCBI Taxonomy" id="7955"/>
    <lineage>
        <taxon>Eukaryota</taxon>
        <taxon>Metazoa</taxon>
        <taxon>Chordata</taxon>
        <taxon>Craniata</taxon>
        <taxon>Vertebrata</taxon>
        <taxon>Euteleostomi</taxon>
        <taxon>Actinopterygii</taxon>
        <taxon>Neopterygii</taxon>
        <taxon>Teleostei</taxon>
        <taxon>Ostariophysi</taxon>
        <taxon>Cypriniformes</taxon>
        <taxon>Danionidae</taxon>
        <taxon>Danioninae</taxon>
        <taxon>Danio</taxon>
    </lineage>
</organism>
<name>MESD_DANRE</name>
<dbReference type="EMBL" id="EH610226">
    <property type="status" value="NOT_ANNOTATED_CDS"/>
    <property type="molecule type" value="mRNA"/>
</dbReference>
<dbReference type="EMBL" id="BC129340">
    <property type="protein sequence ID" value="AAI29341.1"/>
    <property type="molecule type" value="mRNA"/>
</dbReference>
<dbReference type="RefSeq" id="NP_001074173.1">
    <molecule id="A1L243-2"/>
    <property type="nucleotide sequence ID" value="NM_001080704.1"/>
</dbReference>
<dbReference type="RefSeq" id="XP_005166421.1">
    <molecule id="A1L243-1"/>
    <property type="nucleotide sequence ID" value="XM_005166364.5"/>
</dbReference>
<dbReference type="SMR" id="A1L243"/>
<dbReference type="FunCoup" id="A1L243">
    <property type="interactions" value="2238"/>
</dbReference>
<dbReference type="STRING" id="7955.ENSDARP00000142197"/>
<dbReference type="PaxDb" id="7955-ENSDARP00000093291"/>
<dbReference type="PeptideAtlas" id="A1L243"/>
<dbReference type="Ensembl" id="ENSDART00000172796">
    <molecule id="A1L243-1"/>
    <property type="protein sequence ID" value="ENSDARP00000142197"/>
    <property type="gene ID" value="ENSDARG00000063030"/>
</dbReference>
<dbReference type="GeneID" id="791222"/>
<dbReference type="KEGG" id="dre:791222"/>
<dbReference type="AGR" id="ZFIN:ZDB-GENE-070112-2142"/>
<dbReference type="CTD" id="23184"/>
<dbReference type="ZFIN" id="ZDB-GENE-070112-2142">
    <property type="gene designation" value="mesd"/>
</dbReference>
<dbReference type="eggNOG" id="KOG4357">
    <property type="taxonomic scope" value="Eukaryota"/>
</dbReference>
<dbReference type="InParanoid" id="A1L243"/>
<dbReference type="OMA" id="QQRCADV"/>
<dbReference type="OrthoDB" id="75833at2759"/>
<dbReference type="PhylomeDB" id="A1L243"/>
<dbReference type="TreeFam" id="TF315614"/>
<dbReference type="PRO" id="PR:A1L243"/>
<dbReference type="Proteomes" id="UP000000437">
    <property type="component" value="Chromosome 7"/>
</dbReference>
<dbReference type="Bgee" id="ENSDARG00000063030">
    <property type="expression patterns" value="Expressed in tail and 24 other cell types or tissues"/>
</dbReference>
<dbReference type="ExpressionAtlas" id="A1L243">
    <property type="expression patterns" value="baseline"/>
</dbReference>
<dbReference type="GO" id="GO:0005783">
    <property type="term" value="C:endoplasmic reticulum"/>
    <property type="evidence" value="ECO:0007669"/>
    <property type="project" value="UniProtKB-SubCell"/>
</dbReference>
<dbReference type="GO" id="GO:1904395">
    <property type="term" value="P:positive regulation of skeletal muscle acetylcholine-gated channel clustering"/>
    <property type="evidence" value="ECO:0000250"/>
    <property type="project" value="UniProtKB"/>
</dbReference>
<dbReference type="GO" id="GO:0006457">
    <property type="term" value="P:protein folding"/>
    <property type="evidence" value="ECO:0007669"/>
    <property type="project" value="InterPro"/>
</dbReference>
<dbReference type="GO" id="GO:0016055">
    <property type="term" value="P:Wnt signaling pathway"/>
    <property type="evidence" value="ECO:0007669"/>
    <property type="project" value="UniProtKB-KW"/>
</dbReference>
<dbReference type="FunFam" id="3.30.70.260:FF:000031">
    <property type="entry name" value="LDLR chaperone MESD"/>
    <property type="match status" value="1"/>
</dbReference>
<dbReference type="Gene3D" id="3.30.70.260">
    <property type="match status" value="1"/>
</dbReference>
<dbReference type="Gene3D" id="6.10.250.640">
    <property type="match status" value="1"/>
</dbReference>
<dbReference type="InterPro" id="IPR019330">
    <property type="entry name" value="MESD"/>
</dbReference>
<dbReference type="PANTHER" id="PTHR17600:SF2">
    <property type="entry name" value="LRP CHAPERONE MESD"/>
    <property type="match status" value="1"/>
</dbReference>
<dbReference type="PANTHER" id="PTHR17600">
    <property type="entry name" value="MESODERM DEVELOPMENT CANDIDATE 2"/>
    <property type="match status" value="1"/>
</dbReference>
<dbReference type="Pfam" id="PF10185">
    <property type="entry name" value="Mesd"/>
    <property type="match status" value="1"/>
</dbReference>
<dbReference type="PROSITE" id="PS00014">
    <property type="entry name" value="ER_TARGET"/>
    <property type="match status" value="1"/>
</dbReference>
<feature type="signal peptide" evidence="3">
    <location>
        <begin position="1"/>
        <end position="24"/>
    </location>
</feature>
<feature type="chain" id="PRO_0000385020" description="LRP chaperone MESD">
    <location>
        <begin position="25"/>
        <end position="206"/>
    </location>
</feature>
<feature type="region of interest" description="Structured core" evidence="1">
    <location>
        <begin position="93"/>
        <end position="166"/>
    </location>
</feature>
<feature type="region of interest" description="Disordered" evidence="5">
    <location>
        <begin position="171"/>
        <end position="206"/>
    </location>
</feature>
<feature type="short sequence motif" description="Prevents secretion from ER">
    <location>
        <begin position="203"/>
        <end position="206"/>
    </location>
</feature>
<feature type="compositionally biased region" description="Basic and acidic residues" evidence="5">
    <location>
        <begin position="175"/>
        <end position="195"/>
    </location>
</feature>
<feature type="splice variant" id="VSP_038093" description="In isoform 2." evidence="6">
    <original>MASSVGCRTLSVLFLLVLFITVHCTDTKPKKKKDIRDYNDADMARLLEEWE</original>
    <variation>MFEC</variation>
    <location>
        <begin position="1"/>
        <end position="51"/>
    </location>
</feature>
<comment type="function">
    <text evidence="2">Chaperone specifically assisting the folding of beta-propeller/EGF modules within the family of low-density lipoprotein receptors (LDLRs). Acts as a modulator of the Wnt pathway, since some LDLRs are coreceptors for the canonical Wnt pathway (By similarity).</text>
</comment>
<comment type="subunit">
    <text evidence="2">Monomer.</text>
</comment>
<comment type="subcellular location">
    <subcellularLocation>
        <location evidence="2 4">Endoplasmic reticulum</location>
    </subcellularLocation>
</comment>
<comment type="alternative products">
    <event type="alternative splicing"/>
    <isoform>
        <id>A1L243-1</id>
        <name>1</name>
        <sequence type="displayed"/>
    </isoform>
    <isoform>
        <id>A1L243-2</id>
        <name>2</name>
        <sequence type="described" ref="VSP_038093"/>
    </isoform>
</comment>
<comment type="similarity">
    <text evidence="7">Belongs to the MESD family.</text>
</comment>
<reference key="1">
    <citation type="submission" date="2007-01" db="EMBL/GenBank/DDBJ databases">
        <title>Zebrafish transcriptome characterization.</title>
        <authorList>
            <person name="Mathavan S."/>
            <person name="Yao F."/>
            <person name="Wong E."/>
            <person name="Thoreau H."/>
            <person name="Nayudu M."/>
            <person name="Govindarajan K.R."/>
            <person name="Ruan Y."/>
            <person name="Wei C."/>
        </authorList>
    </citation>
    <scope>NUCLEOTIDE SEQUENCE [LARGE SCALE MRNA] (ISOFORM 1)</scope>
    <source>
        <strain>Tuebingen</strain>
        <tissue>Embryo</tissue>
    </source>
</reference>
<reference key="2">
    <citation type="submission" date="2006-12" db="EMBL/GenBank/DDBJ databases">
        <authorList>
            <consortium name="NIH - Zebrafish Gene Collection (ZGC) project"/>
        </authorList>
    </citation>
    <scope>NUCLEOTIDE SEQUENCE [LARGE SCALE MRNA] (ISOFORM 2)</scope>
    <source>
        <tissue>Brain</tissue>
    </source>
</reference>
<accession>A1L243</accession>
<sequence>MASSVGCRTLSVLFLLVLFITVHCTDTKPKKKKDIRDYNDADMARLLEEWEKDDDIEEGDLPEHKRSPPPIDFSKIDASKPEELLKMSKKGKTLMVFASVSGNPTEKETEEITGLWQGSLFNANYDVQRFVVGSNRVIFMLRDGSYAWEIKDFLVSQDRCEDVTVEGQVFPGKNAKKDAKGKEQNETKKKGDKKAANRANKGKQEL</sequence>
<evidence type="ECO:0000250" key="1"/>
<evidence type="ECO:0000250" key="2">
    <source>
        <dbReference type="UniProtKB" id="Q9ERE7"/>
    </source>
</evidence>
<evidence type="ECO:0000255" key="3"/>
<evidence type="ECO:0000255" key="4">
    <source>
        <dbReference type="PROSITE-ProRule" id="PRU10138"/>
    </source>
</evidence>
<evidence type="ECO:0000256" key="5">
    <source>
        <dbReference type="SAM" id="MobiDB-lite"/>
    </source>
</evidence>
<evidence type="ECO:0000303" key="6">
    <source ref="2"/>
</evidence>
<evidence type="ECO:0000305" key="7"/>